<proteinExistence type="evidence at protein level"/>
<organism>
    <name type="scientific">Bacillus subtilis (strain 168)</name>
    <dbReference type="NCBI Taxonomy" id="224308"/>
    <lineage>
        <taxon>Bacteria</taxon>
        <taxon>Bacillati</taxon>
        <taxon>Bacillota</taxon>
        <taxon>Bacilli</taxon>
        <taxon>Bacillales</taxon>
        <taxon>Bacillaceae</taxon>
        <taxon>Bacillus</taxon>
    </lineage>
</organism>
<sequence length="125" mass="14731">MSEKKNIYPNKEGCPVEFTLDVIGGKWKGILFYHMIDGKKRFNEFRRICPSITQRMLTLQLRELEADGIVHREVYHQVPPKVEYSLTEFGRTLEPIVLQMKEWGESNRDVLESYRSNGLVKDQQK</sequence>
<protein>
    <recommendedName>
        <fullName>Uncharacterized HTH-type transcriptional regulator YybR</fullName>
    </recommendedName>
</protein>
<keyword id="KW-0002">3D-structure</keyword>
<keyword id="KW-0238">DNA-binding</keyword>
<keyword id="KW-1185">Reference proteome</keyword>
<keyword id="KW-0804">Transcription</keyword>
<keyword id="KW-0805">Transcription regulation</keyword>
<evidence type="ECO:0000255" key="1">
    <source>
        <dbReference type="PROSITE-ProRule" id="PRU00435"/>
    </source>
</evidence>
<evidence type="ECO:0007829" key="2">
    <source>
        <dbReference type="PDB" id="4A5N"/>
    </source>
</evidence>
<accession>P37486</accession>
<feature type="chain" id="PRO_0000148889" description="Uncharacterized HTH-type transcriptional regulator YybR">
    <location>
        <begin position="1"/>
        <end position="125"/>
    </location>
</feature>
<feature type="domain" description="HTH hxlR-type" evidence="1">
    <location>
        <begin position="14"/>
        <end position="112"/>
    </location>
</feature>
<feature type="helix" evidence="2">
    <location>
        <begin position="15"/>
        <end position="23"/>
    </location>
</feature>
<feature type="strand" evidence="2">
    <location>
        <begin position="25"/>
        <end position="27"/>
    </location>
</feature>
<feature type="helix" evidence="2">
    <location>
        <begin position="28"/>
        <end position="35"/>
    </location>
</feature>
<feature type="helix" evidence="2">
    <location>
        <begin position="42"/>
        <end position="48"/>
    </location>
</feature>
<feature type="helix" evidence="2">
    <location>
        <begin position="54"/>
        <end position="66"/>
    </location>
</feature>
<feature type="strand" evidence="2">
    <location>
        <begin position="69"/>
        <end position="75"/>
    </location>
</feature>
<feature type="strand" evidence="2">
    <location>
        <begin position="77"/>
        <end position="79"/>
    </location>
</feature>
<feature type="strand" evidence="2">
    <location>
        <begin position="81"/>
        <end position="86"/>
    </location>
</feature>
<feature type="helix" evidence="2">
    <location>
        <begin position="90"/>
        <end position="93"/>
    </location>
</feature>
<feature type="helix" evidence="2">
    <location>
        <begin position="94"/>
        <end position="114"/>
    </location>
</feature>
<name>YYBR_BACSU</name>
<gene>
    <name type="primary">yybR</name>
    <name type="ordered locus">BSU40540</name>
</gene>
<reference key="1">
    <citation type="journal article" date="1994" name="DNA Res.">
        <title>Systematic sequencing of the 180 kilobase region of the Bacillus subtilis chromosome containing the replication origin.</title>
        <authorList>
            <person name="Ogasawara N."/>
            <person name="Nakai S."/>
            <person name="Yoshikawa H."/>
        </authorList>
    </citation>
    <scope>NUCLEOTIDE SEQUENCE [GENOMIC DNA]</scope>
    <source>
        <strain>168</strain>
    </source>
</reference>
<reference key="2">
    <citation type="journal article" date="1997" name="Nature">
        <title>The complete genome sequence of the Gram-positive bacterium Bacillus subtilis.</title>
        <authorList>
            <person name="Kunst F."/>
            <person name="Ogasawara N."/>
            <person name="Moszer I."/>
            <person name="Albertini A.M."/>
            <person name="Alloni G."/>
            <person name="Azevedo V."/>
            <person name="Bertero M.G."/>
            <person name="Bessieres P."/>
            <person name="Bolotin A."/>
            <person name="Borchert S."/>
            <person name="Borriss R."/>
            <person name="Boursier L."/>
            <person name="Brans A."/>
            <person name="Braun M."/>
            <person name="Brignell S.C."/>
            <person name="Bron S."/>
            <person name="Brouillet S."/>
            <person name="Bruschi C.V."/>
            <person name="Caldwell B."/>
            <person name="Capuano V."/>
            <person name="Carter N.M."/>
            <person name="Choi S.-K."/>
            <person name="Codani J.-J."/>
            <person name="Connerton I.F."/>
            <person name="Cummings N.J."/>
            <person name="Daniel R.A."/>
            <person name="Denizot F."/>
            <person name="Devine K.M."/>
            <person name="Duesterhoeft A."/>
            <person name="Ehrlich S.D."/>
            <person name="Emmerson P.T."/>
            <person name="Entian K.-D."/>
            <person name="Errington J."/>
            <person name="Fabret C."/>
            <person name="Ferrari E."/>
            <person name="Foulger D."/>
            <person name="Fritz C."/>
            <person name="Fujita M."/>
            <person name="Fujita Y."/>
            <person name="Fuma S."/>
            <person name="Galizzi A."/>
            <person name="Galleron N."/>
            <person name="Ghim S.-Y."/>
            <person name="Glaser P."/>
            <person name="Goffeau A."/>
            <person name="Golightly E.J."/>
            <person name="Grandi G."/>
            <person name="Guiseppi G."/>
            <person name="Guy B.J."/>
            <person name="Haga K."/>
            <person name="Haiech J."/>
            <person name="Harwood C.R."/>
            <person name="Henaut A."/>
            <person name="Hilbert H."/>
            <person name="Holsappel S."/>
            <person name="Hosono S."/>
            <person name="Hullo M.-F."/>
            <person name="Itaya M."/>
            <person name="Jones L.-M."/>
            <person name="Joris B."/>
            <person name="Karamata D."/>
            <person name="Kasahara Y."/>
            <person name="Klaerr-Blanchard M."/>
            <person name="Klein C."/>
            <person name="Kobayashi Y."/>
            <person name="Koetter P."/>
            <person name="Koningstein G."/>
            <person name="Krogh S."/>
            <person name="Kumano M."/>
            <person name="Kurita K."/>
            <person name="Lapidus A."/>
            <person name="Lardinois S."/>
            <person name="Lauber J."/>
            <person name="Lazarevic V."/>
            <person name="Lee S.-M."/>
            <person name="Levine A."/>
            <person name="Liu H."/>
            <person name="Masuda S."/>
            <person name="Mauel C."/>
            <person name="Medigue C."/>
            <person name="Medina N."/>
            <person name="Mellado R.P."/>
            <person name="Mizuno M."/>
            <person name="Moestl D."/>
            <person name="Nakai S."/>
            <person name="Noback M."/>
            <person name="Noone D."/>
            <person name="O'Reilly M."/>
            <person name="Ogawa K."/>
            <person name="Ogiwara A."/>
            <person name="Oudega B."/>
            <person name="Park S.-H."/>
            <person name="Parro V."/>
            <person name="Pohl T.M."/>
            <person name="Portetelle D."/>
            <person name="Porwollik S."/>
            <person name="Prescott A.M."/>
            <person name="Presecan E."/>
            <person name="Pujic P."/>
            <person name="Purnelle B."/>
            <person name="Rapoport G."/>
            <person name="Rey M."/>
            <person name="Reynolds S."/>
            <person name="Rieger M."/>
            <person name="Rivolta C."/>
            <person name="Rocha E."/>
            <person name="Roche B."/>
            <person name="Rose M."/>
            <person name="Sadaie Y."/>
            <person name="Sato T."/>
            <person name="Scanlan E."/>
            <person name="Schleich S."/>
            <person name="Schroeter R."/>
            <person name="Scoffone F."/>
            <person name="Sekiguchi J."/>
            <person name="Sekowska A."/>
            <person name="Seror S.J."/>
            <person name="Serror P."/>
            <person name="Shin B.-S."/>
            <person name="Soldo B."/>
            <person name="Sorokin A."/>
            <person name="Tacconi E."/>
            <person name="Takagi T."/>
            <person name="Takahashi H."/>
            <person name="Takemaru K."/>
            <person name="Takeuchi M."/>
            <person name="Tamakoshi A."/>
            <person name="Tanaka T."/>
            <person name="Terpstra P."/>
            <person name="Tognoni A."/>
            <person name="Tosato V."/>
            <person name="Uchiyama S."/>
            <person name="Vandenbol M."/>
            <person name="Vannier F."/>
            <person name="Vassarotti A."/>
            <person name="Viari A."/>
            <person name="Wambutt R."/>
            <person name="Wedler E."/>
            <person name="Wedler H."/>
            <person name="Weitzenegger T."/>
            <person name="Winters P."/>
            <person name="Wipat A."/>
            <person name="Yamamoto H."/>
            <person name="Yamane K."/>
            <person name="Yasumoto K."/>
            <person name="Yata K."/>
            <person name="Yoshida K."/>
            <person name="Yoshikawa H.-F."/>
            <person name="Zumstein E."/>
            <person name="Yoshikawa H."/>
            <person name="Danchin A."/>
        </authorList>
    </citation>
    <scope>NUCLEOTIDE SEQUENCE [LARGE SCALE GENOMIC DNA]</scope>
    <source>
        <strain>168</strain>
    </source>
</reference>
<dbReference type="EMBL" id="D26185">
    <property type="protein sequence ID" value="BAA05185.1"/>
    <property type="molecule type" value="Genomic_DNA"/>
</dbReference>
<dbReference type="EMBL" id="AL009126">
    <property type="protein sequence ID" value="CAB16091.1"/>
    <property type="molecule type" value="Genomic_DNA"/>
</dbReference>
<dbReference type="PIR" id="S65979">
    <property type="entry name" value="S65979"/>
</dbReference>
<dbReference type="RefSeq" id="WP_003242487.1">
    <property type="nucleotide sequence ID" value="NZ_OZ025638.1"/>
</dbReference>
<dbReference type="PDB" id="4A5M">
    <property type="method" value="X-ray"/>
    <property type="resolution" value="3.00 A"/>
    <property type="chains" value="A/B/C/D/E/F/G/H=1-125"/>
</dbReference>
<dbReference type="PDB" id="4A5N">
    <property type="method" value="X-ray"/>
    <property type="resolution" value="1.81 A"/>
    <property type="chains" value="A/B/C/D=1-125"/>
</dbReference>
<dbReference type="PDBsum" id="4A5M"/>
<dbReference type="PDBsum" id="4A5N"/>
<dbReference type="SMR" id="P37486"/>
<dbReference type="FunCoup" id="P37486">
    <property type="interactions" value="95"/>
</dbReference>
<dbReference type="STRING" id="224308.BSU40540"/>
<dbReference type="PaxDb" id="224308-BSU40540"/>
<dbReference type="EnsemblBacteria" id="CAB16091">
    <property type="protein sequence ID" value="CAB16091"/>
    <property type="gene ID" value="BSU_40540"/>
</dbReference>
<dbReference type="GeneID" id="937825"/>
<dbReference type="KEGG" id="bsu:BSU40540"/>
<dbReference type="PATRIC" id="fig|224308.179.peg.4390"/>
<dbReference type="eggNOG" id="COG1733">
    <property type="taxonomic scope" value="Bacteria"/>
</dbReference>
<dbReference type="InParanoid" id="P37486"/>
<dbReference type="OrthoDB" id="9791143at2"/>
<dbReference type="PhylomeDB" id="P37486"/>
<dbReference type="BioCyc" id="BSUB:BSU40540-MONOMER"/>
<dbReference type="EvolutionaryTrace" id="P37486"/>
<dbReference type="Proteomes" id="UP000001570">
    <property type="component" value="Chromosome"/>
</dbReference>
<dbReference type="GO" id="GO:0003677">
    <property type="term" value="F:DNA binding"/>
    <property type="evidence" value="ECO:0007669"/>
    <property type="project" value="UniProtKB-KW"/>
</dbReference>
<dbReference type="Gene3D" id="1.10.10.10">
    <property type="entry name" value="Winged helix-like DNA-binding domain superfamily/Winged helix DNA-binding domain"/>
    <property type="match status" value="1"/>
</dbReference>
<dbReference type="InterPro" id="IPR002577">
    <property type="entry name" value="HTH_HxlR"/>
</dbReference>
<dbReference type="InterPro" id="IPR036388">
    <property type="entry name" value="WH-like_DNA-bd_sf"/>
</dbReference>
<dbReference type="InterPro" id="IPR036390">
    <property type="entry name" value="WH_DNA-bd_sf"/>
</dbReference>
<dbReference type="PANTHER" id="PTHR33204">
    <property type="entry name" value="TRANSCRIPTIONAL REGULATOR, MARR FAMILY"/>
    <property type="match status" value="1"/>
</dbReference>
<dbReference type="PANTHER" id="PTHR33204:SF33">
    <property type="entry name" value="TRANSCRIPTIONAL REGULATOR, MARR FAMILY"/>
    <property type="match status" value="1"/>
</dbReference>
<dbReference type="Pfam" id="PF01638">
    <property type="entry name" value="HxlR"/>
    <property type="match status" value="1"/>
</dbReference>
<dbReference type="SUPFAM" id="SSF46785">
    <property type="entry name" value="Winged helix' DNA-binding domain"/>
    <property type="match status" value="1"/>
</dbReference>
<dbReference type="PROSITE" id="PS51118">
    <property type="entry name" value="HTH_HXLR"/>
    <property type="match status" value="1"/>
</dbReference>